<name>PFKA_LIGS1</name>
<accession>Q1WTT3</accession>
<comment type="function">
    <text evidence="1">Catalyzes the phosphorylation of D-fructose 6-phosphate to fructose 1,6-bisphosphate by ATP, the first committing step of glycolysis.</text>
</comment>
<comment type="catalytic activity">
    <reaction evidence="1">
        <text>beta-D-fructose 6-phosphate + ATP = beta-D-fructose 1,6-bisphosphate + ADP + H(+)</text>
        <dbReference type="Rhea" id="RHEA:16109"/>
        <dbReference type="ChEBI" id="CHEBI:15378"/>
        <dbReference type="ChEBI" id="CHEBI:30616"/>
        <dbReference type="ChEBI" id="CHEBI:32966"/>
        <dbReference type="ChEBI" id="CHEBI:57634"/>
        <dbReference type="ChEBI" id="CHEBI:456216"/>
        <dbReference type="EC" id="2.7.1.11"/>
    </reaction>
</comment>
<comment type="cofactor">
    <cofactor evidence="1">
        <name>Mg(2+)</name>
        <dbReference type="ChEBI" id="CHEBI:18420"/>
    </cofactor>
</comment>
<comment type="activity regulation">
    <text evidence="1">Allosterically activated by ADP and other diphosphonucleosides, and allosterically inhibited by phosphoenolpyruvate.</text>
</comment>
<comment type="pathway">
    <text evidence="1">Carbohydrate degradation; glycolysis; D-glyceraldehyde 3-phosphate and glycerone phosphate from D-glucose: step 3/4.</text>
</comment>
<comment type="subunit">
    <text evidence="1">Homotetramer.</text>
</comment>
<comment type="subcellular location">
    <subcellularLocation>
        <location evidence="1">Cytoplasm</location>
    </subcellularLocation>
</comment>
<comment type="similarity">
    <text evidence="1">Belongs to the phosphofructokinase type A (PFKA) family. ATP-dependent PFK group I subfamily. Prokaryotic clade 'B1' sub-subfamily.</text>
</comment>
<protein>
    <recommendedName>
        <fullName evidence="1">ATP-dependent 6-phosphofructokinase</fullName>
        <shortName evidence="1">ATP-PFK</shortName>
        <shortName evidence="1">Phosphofructokinase</shortName>
        <ecNumber evidence="1">2.7.1.11</ecNumber>
    </recommendedName>
    <alternativeName>
        <fullName evidence="1">Phosphohexokinase</fullName>
    </alternativeName>
</protein>
<keyword id="KW-0021">Allosteric enzyme</keyword>
<keyword id="KW-0067">ATP-binding</keyword>
<keyword id="KW-0963">Cytoplasm</keyword>
<keyword id="KW-0324">Glycolysis</keyword>
<keyword id="KW-0418">Kinase</keyword>
<keyword id="KW-0460">Magnesium</keyword>
<keyword id="KW-0479">Metal-binding</keyword>
<keyword id="KW-0547">Nucleotide-binding</keyword>
<keyword id="KW-1185">Reference proteome</keyword>
<keyword id="KW-0808">Transferase</keyword>
<organism>
    <name type="scientific">Ligilactobacillus salivarius (strain UCC118)</name>
    <name type="common">Lactobacillus salivarius</name>
    <dbReference type="NCBI Taxonomy" id="362948"/>
    <lineage>
        <taxon>Bacteria</taxon>
        <taxon>Bacillati</taxon>
        <taxon>Bacillota</taxon>
        <taxon>Bacilli</taxon>
        <taxon>Lactobacillales</taxon>
        <taxon>Lactobacillaceae</taxon>
        <taxon>Ligilactobacillus</taxon>
    </lineage>
</organism>
<proteinExistence type="inferred from homology"/>
<sequence>MKRIGILTSGGDAAGMNAAVRAIARSAMNAGLEAYGINYGYKGLVEGNIFKMESTKLDEIINRGGTILYSARFPEFAETETQLKGIEQLKKFGIEALVVIGGDGSYHGAEKLTMHGYNSIGVPGTIDNDIPGTDFTIGFDTAANVAMEALDRINDTATSHQRVFVVEVMGRGAGDIALWSGIATGADAIVIPEREYDIEAIANKISENRKNGKDHGLIVLAEGVMGAAEFKEKLDQYGDFDSRAITLGHIQRGGNPTVKDRVLATRLGDYAIRLLLEGKGGLAIGIHDNQLVATDIIDTLENHKHQTDVSLQDLNDRVRF</sequence>
<reference key="1">
    <citation type="journal article" date="2006" name="Proc. Natl. Acad. Sci. U.S.A.">
        <title>Multireplicon genome architecture of Lactobacillus salivarius.</title>
        <authorList>
            <person name="Claesson M.J."/>
            <person name="Li Y."/>
            <person name="Leahy S."/>
            <person name="Canchaya C."/>
            <person name="van Pijkeren J.P."/>
            <person name="Cerdeno-Tarraga A.M."/>
            <person name="Parkhill J."/>
            <person name="Flynn S."/>
            <person name="O'Sullivan G.C."/>
            <person name="Collins J.K."/>
            <person name="Higgins D."/>
            <person name="Shanahan F."/>
            <person name="Fitzgerald G.F."/>
            <person name="van Sinderen D."/>
            <person name="O'Toole P.W."/>
        </authorList>
    </citation>
    <scope>NUCLEOTIDE SEQUENCE [LARGE SCALE GENOMIC DNA]</scope>
    <source>
        <strain>UCC118</strain>
    </source>
</reference>
<dbReference type="EC" id="2.7.1.11" evidence="1"/>
<dbReference type="EMBL" id="CP000233">
    <property type="protein sequence ID" value="ABD99676.1"/>
    <property type="molecule type" value="Genomic_DNA"/>
</dbReference>
<dbReference type="RefSeq" id="WP_003700206.1">
    <property type="nucleotide sequence ID" value="NC_007929.1"/>
</dbReference>
<dbReference type="RefSeq" id="YP_535759.1">
    <property type="nucleotide sequence ID" value="NC_007929.1"/>
</dbReference>
<dbReference type="SMR" id="Q1WTT3"/>
<dbReference type="STRING" id="362948.LSL_0866"/>
<dbReference type="KEGG" id="lsl:LSL_0866"/>
<dbReference type="PATRIC" id="fig|362948.14.peg.941"/>
<dbReference type="HOGENOM" id="CLU_020655_0_1_9"/>
<dbReference type="OrthoDB" id="9802503at2"/>
<dbReference type="UniPathway" id="UPA00109">
    <property type="reaction ID" value="UER00182"/>
</dbReference>
<dbReference type="Proteomes" id="UP000006559">
    <property type="component" value="Chromosome"/>
</dbReference>
<dbReference type="GO" id="GO:0005945">
    <property type="term" value="C:6-phosphofructokinase complex"/>
    <property type="evidence" value="ECO:0007669"/>
    <property type="project" value="TreeGrafter"/>
</dbReference>
<dbReference type="GO" id="GO:0003872">
    <property type="term" value="F:6-phosphofructokinase activity"/>
    <property type="evidence" value="ECO:0007669"/>
    <property type="project" value="UniProtKB-UniRule"/>
</dbReference>
<dbReference type="GO" id="GO:0016208">
    <property type="term" value="F:AMP binding"/>
    <property type="evidence" value="ECO:0007669"/>
    <property type="project" value="TreeGrafter"/>
</dbReference>
<dbReference type="GO" id="GO:0005524">
    <property type="term" value="F:ATP binding"/>
    <property type="evidence" value="ECO:0007669"/>
    <property type="project" value="UniProtKB-KW"/>
</dbReference>
<dbReference type="GO" id="GO:0070095">
    <property type="term" value="F:fructose-6-phosphate binding"/>
    <property type="evidence" value="ECO:0007669"/>
    <property type="project" value="TreeGrafter"/>
</dbReference>
<dbReference type="GO" id="GO:0042802">
    <property type="term" value="F:identical protein binding"/>
    <property type="evidence" value="ECO:0007669"/>
    <property type="project" value="TreeGrafter"/>
</dbReference>
<dbReference type="GO" id="GO:0046872">
    <property type="term" value="F:metal ion binding"/>
    <property type="evidence" value="ECO:0007669"/>
    <property type="project" value="UniProtKB-KW"/>
</dbReference>
<dbReference type="GO" id="GO:0048029">
    <property type="term" value="F:monosaccharide binding"/>
    <property type="evidence" value="ECO:0007669"/>
    <property type="project" value="TreeGrafter"/>
</dbReference>
<dbReference type="GO" id="GO:0061621">
    <property type="term" value="P:canonical glycolysis"/>
    <property type="evidence" value="ECO:0007669"/>
    <property type="project" value="TreeGrafter"/>
</dbReference>
<dbReference type="GO" id="GO:0030388">
    <property type="term" value="P:fructose 1,6-bisphosphate metabolic process"/>
    <property type="evidence" value="ECO:0007669"/>
    <property type="project" value="TreeGrafter"/>
</dbReference>
<dbReference type="GO" id="GO:0006002">
    <property type="term" value="P:fructose 6-phosphate metabolic process"/>
    <property type="evidence" value="ECO:0007669"/>
    <property type="project" value="InterPro"/>
</dbReference>
<dbReference type="FunFam" id="3.40.50.450:FF:000001">
    <property type="entry name" value="ATP-dependent 6-phosphofructokinase"/>
    <property type="match status" value="1"/>
</dbReference>
<dbReference type="FunFam" id="3.40.50.460:FF:000002">
    <property type="entry name" value="ATP-dependent 6-phosphofructokinase"/>
    <property type="match status" value="1"/>
</dbReference>
<dbReference type="Gene3D" id="3.40.50.450">
    <property type="match status" value="1"/>
</dbReference>
<dbReference type="Gene3D" id="3.40.50.460">
    <property type="entry name" value="Phosphofructokinase domain"/>
    <property type="match status" value="1"/>
</dbReference>
<dbReference type="HAMAP" id="MF_00339">
    <property type="entry name" value="Phosphofructokinase_I_B1"/>
    <property type="match status" value="1"/>
</dbReference>
<dbReference type="InterPro" id="IPR022953">
    <property type="entry name" value="ATP_PFK"/>
</dbReference>
<dbReference type="InterPro" id="IPR012003">
    <property type="entry name" value="ATP_PFK_prok-type"/>
</dbReference>
<dbReference type="InterPro" id="IPR012828">
    <property type="entry name" value="PFKA_ATP_prok"/>
</dbReference>
<dbReference type="InterPro" id="IPR015912">
    <property type="entry name" value="Phosphofructokinase_CS"/>
</dbReference>
<dbReference type="InterPro" id="IPR000023">
    <property type="entry name" value="Phosphofructokinase_dom"/>
</dbReference>
<dbReference type="InterPro" id="IPR035966">
    <property type="entry name" value="PKF_sf"/>
</dbReference>
<dbReference type="NCBIfam" id="TIGR02482">
    <property type="entry name" value="PFKA_ATP"/>
    <property type="match status" value="1"/>
</dbReference>
<dbReference type="NCBIfam" id="NF002872">
    <property type="entry name" value="PRK03202.1"/>
    <property type="match status" value="1"/>
</dbReference>
<dbReference type="PANTHER" id="PTHR13697:SF4">
    <property type="entry name" value="ATP-DEPENDENT 6-PHOSPHOFRUCTOKINASE"/>
    <property type="match status" value="1"/>
</dbReference>
<dbReference type="PANTHER" id="PTHR13697">
    <property type="entry name" value="PHOSPHOFRUCTOKINASE"/>
    <property type="match status" value="1"/>
</dbReference>
<dbReference type="Pfam" id="PF00365">
    <property type="entry name" value="PFK"/>
    <property type="match status" value="1"/>
</dbReference>
<dbReference type="PIRSF" id="PIRSF000532">
    <property type="entry name" value="ATP_PFK_prok"/>
    <property type="match status" value="1"/>
</dbReference>
<dbReference type="PRINTS" id="PR00476">
    <property type="entry name" value="PHFRCTKINASE"/>
</dbReference>
<dbReference type="SUPFAM" id="SSF53784">
    <property type="entry name" value="Phosphofructokinase"/>
    <property type="match status" value="1"/>
</dbReference>
<dbReference type="PROSITE" id="PS00433">
    <property type="entry name" value="PHOSPHOFRUCTOKINASE"/>
    <property type="match status" value="1"/>
</dbReference>
<feature type="chain" id="PRO_1000059775" description="ATP-dependent 6-phosphofructokinase">
    <location>
        <begin position="1"/>
        <end position="320"/>
    </location>
</feature>
<feature type="active site" description="Proton acceptor" evidence="1">
    <location>
        <position position="127"/>
    </location>
</feature>
<feature type="binding site" evidence="1">
    <location>
        <position position="11"/>
    </location>
    <ligand>
        <name>ATP</name>
        <dbReference type="ChEBI" id="CHEBI:30616"/>
    </ligand>
</feature>
<feature type="binding site" evidence="1">
    <location>
        <begin position="21"/>
        <end position="25"/>
    </location>
    <ligand>
        <name>ADP</name>
        <dbReference type="ChEBI" id="CHEBI:456216"/>
        <note>allosteric activator; ligand shared between dimeric partners</note>
    </ligand>
</feature>
<feature type="binding site" evidence="1">
    <location>
        <begin position="72"/>
        <end position="73"/>
    </location>
    <ligand>
        <name>ATP</name>
        <dbReference type="ChEBI" id="CHEBI:30616"/>
    </ligand>
</feature>
<feature type="binding site" evidence="1">
    <location>
        <begin position="102"/>
        <end position="105"/>
    </location>
    <ligand>
        <name>ATP</name>
        <dbReference type="ChEBI" id="CHEBI:30616"/>
    </ligand>
</feature>
<feature type="binding site" evidence="1">
    <location>
        <position position="103"/>
    </location>
    <ligand>
        <name>Mg(2+)</name>
        <dbReference type="ChEBI" id="CHEBI:18420"/>
        <note>catalytic</note>
    </ligand>
</feature>
<feature type="binding site" description="in other chain" evidence="1">
    <location>
        <begin position="125"/>
        <end position="127"/>
    </location>
    <ligand>
        <name>substrate</name>
        <note>ligand shared between dimeric partners</note>
    </ligand>
</feature>
<feature type="binding site" evidence="1">
    <location>
        <position position="162"/>
    </location>
    <ligand>
        <name>substrate</name>
        <note>ligand shared between dimeric partners</note>
    </ligand>
</feature>
<feature type="binding site" description="in other chain" evidence="1">
    <location>
        <begin position="169"/>
        <end position="171"/>
    </location>
    <ligand>
        <name>substrate</name>
        <note>ligand shared between dimeric partners</note>
    </ligand>
</feature>
<feature type="binding site" description="in other chain" evidence="1">
    <location>
        <begin position="185"/>
        <end position="187"/>
    </location>
    <ligand>
        <name>ADP</name>
        <dbReference type="ChEBI" id="CHEBI:456216"/>
        <note>allosteric activator; ligand shared between dimeric partners</note>
    </ligand>
</feature>
<feature type="binding site" description="in other chain" evidence="1">
    <location>
        <begin position="213"/>
        <end position="215"/>
    </location>
    <ligand>
        <name>ADP</name>
        <dbReference type="ChEBI" id="CHEBI:456216"/>
        <note>allosteric activator; ligand shared between dimeric partners</note>
    </ligand>
</feature>
<feature type="binding site" description="in other chain" evidence="1">
    <location>
        <position position="222"/>
    </location>
    <ligand>
        <name>substrate</name>
        <note>ligand shared between dimeric partners</note>
    </ligand>
</feature>
<feature type="binding site" evidence="1">
    <location>
        <position position="243"/>
    </location>
    <ligand>
        <name>substrate</name>
        <note>ligand shared between dimeric partners</note>
    </ligand>
</feature>
<feature type="binding site" description="in other chain" evidence="1">
    <location>
        <begin position="249"/>
        <end position="252"/>
    </location>
    <ligand>
        <name>substrate</name>
        <note>ligand shared between dimeric partners</note>
    </ligand>
</feature>
<evidence type="ECO:0000255" key="1">
    <source>
        <dbReference type="HAMAP-Rule" id="MF_00339"/>
    </source>
</evidence>
<gene>
    <name evidence="1" type="primary">pfkA</name>
    <name type="ordered locus">LSL_0866</name>
</gene>